<comment type="similarity">
    <text evidence="1">Belongs to the UPF0260 family.</text>
</comment>
<protein>
    <recommendedName>
        <fullName evidence="1">UPF0260 protein mll2411</fullName>
    </recommendedName>
</protein>
<proteinExistence type="inferred from homology"/>
<feature type="chain" id="PRO_0000214588" description="UPF0260 protein mll2411">
    <location>
        <begin position="1"/>
        <end position="148"/>
    </location>
</feature>
<accession>Q98IG7</accession>
<dbReference type="EMBL" id="BA000012">
    <property type="protein sequence ID" value="BAB49549.1"/>
    <property type="molecule type" value="Genomic_DNA"/>
</dbReference>
<dbReference type="RefSeq" id="WP_010910901.1">
    <property type="nucleotide sequence ID" value="NC_002678.2"/>
</dbReference>
<dbReference type="KEGG" id="mlo:mll2411"/>
<dbReference type="eggNOG" id="COG2983">
    <property type="taxonomic scope" value="Bacteria"/>
</dbReference>
<dbReference type="HOGENOM" id="CLU_109769_0_1_5"/>
<dbReference type="Proteomes" id="UP000000552">
    <property type="component" value="Chromosome"/>
</dbReference>
<dbReference type="HAMAP" id="MF_00676">
    <property type="entry name" value="UPF0260"/>
    <property type="match status" value="1"/>
</dbReference>
<dbReference type="InterPro" id="IPR005358">
    <property type="entry name" value="Puta_zinc/iron-chelating_dom"/>
</dbReference>
<dbReference type="InterPro" id="IPR008228">
    <property type="entry name" value="UCP006173"/>
</dbReference>
<dbReference type="NCBIfam" id="NF003501">
    <property type="entry name" value="PRK05170.1-5"/>
    <property type="match status" value="1"/>
</dbReference>
<dbReference type="NCBIfam" id="NF003507">
    <property type="entry name" value="PRK05170.2-5"/>
    <property type="match status" value="1"/>
</dbReference>
<dbReference type="PANTHER" id="PTHR37421">
    <property type="entry name" value="UPF0260 PROTEIN YCGN"/>
    <property type="match status" value="1"/>
</dbReference>
<dbReference type="PANTHER" id="PTHR37421:SF1">
    <property type="entry name" value="UPF0260 PROTEIN YCGN"/>
    <property type="match status" value="1"/>
</dbReference>
<dbReference type="Pfam" id="PF03692">
    <property type="entry name" value="CxxCxxCC"/>
    <property type="match status" value="1"/>
</dbReference>
<dbReference type="PIRSF" id="PIRSF006173">
    <property type="entry name" value="UCP006173"/>
    <property type="match status" value="1"/>
</dbReference>
<sequence length="148" mass="16865">METPFWKTKTLEQMSPAEWESLCDGCGKCCLSKLEDEDTGEIYWTSVGCRLFDAQTCRCSDYANRLARVPDCVGLTPQNVRTISWLPSTCAYRLVAEGRDLYWWHRLVSGSAETVHEAGISMRGRVKASETDLAEPEDYFDYMLDDEP</sequence>
<reference key="1">
    <citation type="journal article" date="2000" name="DNA Res.">
        <title>Complete genome structure of the nitrogen-fixing symbiotic bacterium Mesorhizobium loti.</title>
        <authorList>
            <person name="Kaneko T."/>
            <person name="Nakamura Y."/>
            <person name="Sato S."/>
            <person name="Asamizu E."/>
            <person name="Kato T."/>
            <person name="Sasamoto S."/>
            <person name="Watanabe A."/>
            <person name="Idesawa K."/>
            <person name="Ishikawa A."/>
            <person name="Kawashima K."/>
            <person name="Kimura T."/>
            <person name="Kishida Y."/>
            <person name="Kiyokawa C."/>
            <person name="Kohara M."/>
            <person name="Matsumoto M."/>
            <person name="Matsuno A."/>
            <person name="Mochizuki Y."/>
            <person name="Nakayama S."/>
            <person name="Nakazaki N."/>
            <person name="Shimpo S."/>
            <person name="Sugimoto M."/>
            <person name="Takeuchi C."/>
            <person name="Yamada M."/>
            <person name="Tabata S."/>
        </authorList>
    </citation>
    <scope>NUCLEOTIDE SEQUENCE [LARGE SCALE GENOMIC DNA]</scope>
    <source>
        <strain>LMG 29417 / CECT 9101 / MAFF 303099</strain>
    </source>
</reference>
<organism>
    <name type="scientific">Mesorhizobium japonicum (strain LMG 29417 / CECT 9101 / MAFF 303099)</name>
    <name type="common">Mesorhizobium loti (strain MAFF 303099)</name>
    <dbReference type="NCBI Taxonomy" id="266835"/>
    <lineage>
        <taxon>Bacteria</taxon>
        <taxon>Pseudomonadati</taxon>
        <taxon>Pseudomonadota</taxon>
        <taxon>Alphaproteobacteria</taxon>
        <taxon>Hyphomicrobiales</taxon>
        <taxon>Phyllobacteriaceae</taxon>
        <taxon>Mesorhizobium</taxon>
    </lineage>
</organism>
<gene>
    <name type="ordered locus">mll2411</name>
</gene>
<evidence type="ECO:0000255" key="1">
    <source>
        <dbReference type="HAMAP-Rule" id="MF_00676"/>
    </source>
</evidence>
<name>Y2411_RHILO</name>